<proteinExistence type="evidence at transcript level"/>
<accession>A0JN52</accession>
<gene>
    <name type="primary">SF3B3</name>
</gene>
<keyword id="KW-0507">mRNA processing</keyword>
<keyword id="KW-0508">mRNA splicing</keyword>
<keyword id="KW-0539">Nucleus</keyword>
<keyword id="KW-0597">Phosphoprotein</keyword>
<keyword id="KW-1185">Reference proteome</keyword>
<keyword id="KW-0747">Spliceosome</keyword>
<evidence type="ECO:0000250" key="1">
    <source>
        <dbReference type="UniProtKB" id="Q15393"/>
    </source>
</evidence>
<evidence type="ECO:0000305" key="2"/>
<feature type="chain" id="PRO_0000276754" description="Splicing factor 3B subunit 3">
    <location>
        <begin position="1"/>
        <end position="1217"/>
    </location>
</feature>
<feature type="region of interest" description="Interaction with PHF5A, SF3B1 and SF3B5" evidence="1">
    <location>
        <begin position="105"/>
        <end position="119"/>
    </location>
</feature>
<feature type="region of interest" description="Interaction with PHF5A, SF3B1 and SF3B5" evidence="1">
    <location>
        <begin position="145"/>
        <end position="168"/>
    </location>
</feature>
<feature type="region of interest" description="Interaction with SF3B1 and SF3B5" evidence="1">
    <location>
        <begin position="193"/>
        <end position="231"/>
    </location>
</feature>
<feature type="region of interest" description="Interaction with SF3B1 and SF3B5" evidence="1">
    <location>
        <begin position="786"/>
        <end position="804"/>
    </location>
</feature>
<feature type="region of interest" description="Interaction with SF3B1" evidence="1">
    <location>
        <begin position="1028"/>
        <end position="1049"/>
    </location>
</feature>
<feature type="region of interest" description="Interaction with SF3B5" evidence="1">
    <location>
        <begin position="1100"/>
        <end position="1123"/>
    </location>
</feature>
<feature type="site" description="Interaction with SF3B5" evidence="1">
    <location>
        <position position="284"/>
    </location>
</feature>
<feature type="site" description="Interaction with SF3B5" evidence="1">
    <location>
        <position position="306"/>
    </location>
</feature>
<feature type="site" description="Interaction with SF3B5" evidence="1">
    <location>
        <position position="352"/>
    </location>
</feature>
<feature type="site" description="Interaction with SF3B5" evidence="1">
    <location>
        <position position="429"/>
    </location>
</feature>
<feature type="site" description="Interaction with SF3B5" evidence="1">
    <location>
        <position position="916"/>
    </location>
</feature>
<feature type="site" description="Interaction with SF3B1" evidence="1">
    <location>
        <position position="988"/>
    </location>
</feature>
<feature type="site" description="Interaction with SF3B1" evidence="1">
    <location>
        <position position="1171"/>
    </location>
</feature>
<feature type="modified residue" description="Phosphoserine" evidence="1">
    <location>
        <position position="156"/>
    </location>
</feature>
<feature type="modified residue" description="Phosphothreonine" evidence="1">
    <location>
        <position position="1200"/>
    </location>
</feature>
<comment type="function">
    <text evidence="1">Component of the 17S U2 SnRNP complex of the spliceosome, a large ribonucleoprotein complex that removes introns from transcribed pre-mRNAs. The 17S U2 SnRNP complex (1) directly participates in early spliceosome assembly and (2) mediates recognition of the intron branch site during pre-mRNA splicing by promoting the selection of the pre-mRNA branch-site adenosine, the nucleophile for the first step of splicing. Within the 17S U2 SnRNP complex, SF3B3 is part of the SF3B subcomplex, which is required for 'A' complex assembly formed by the stable binding of U2 snRNP to the branchpoint sequence in pre-mRNA. Sequence independent binding of SF3A and SF3B subcomplexes upstream of the branch site is essential, it may anchor U2 snRNP to the pre-mRNA. May also be involved in the assembly of the 'E' complex. Also acts as a component of the minor spliceosome, which is involved in the splicing of U12-type introns in pre-mRNAs.</text>
</comment>
<comment type="subunit">
    <text evidence="1">Component of the 17S U2 SnRNP complex, a ribonucleoprotein complex that contains small nuclear RNA (snRNA) U2 and a number of specific proteins. Part of the SF3B subcomplex of the 17S U2 SnRNP complex. SF3B associates with the splicing subcomplex SF3A and a 12S RNA unit to form the U2 small nuclear ribonucleoproteins complex (U2 snRNP). Within the SF3B subcomplex, interacts directly with SF3B1 (via HEAT domain), SF3B5 and PHF5A. Identified in the spliceosome A complex; remains associated with the spliceosome throughout the splicing process. Component of the spliceosome B complex. Identified in the spliceosome C complex. Identified in the spliceosome E complex. Component of the minor (U12-type spliceosome) spliceosome. Within this complex, interacts with SCNM1. Associates with the STAGA transcription coactivator-HAT complex. Interacts with SUPT3H. Interacts with TAF3.</text>
</comment>
<comment type="subcellular location">
    <subcellularLocation>
        <location evidence="1">Nucleus</location>
    </subcellularLocation>
</comment>
<comment type="domain">
    <text evidence="1">The core of the protein consists of three beta-propeller domains.</text>
</comment>
<comment type="similarity">
    <text evidence="2">Belongs to the RSE1 family.</text>
</comment>
<name>SF3B3_BOVIN</name>
<sequence length="1217" mass="135577">MFLYNLTLQRATGISFAIHGNFSGTKQQEIVVSRGKILELLRPDPNTGKVHTLLTVEVFGVIRSLMAFRLTGGTKDYIVVGSDSGRIVILEYQPSKNMFEKIHQETFGKSGCRRIVPGQFLAVDPKGRAVMISAIEKQKLVYILNRDAAARLTISSPLEAHKANTLVYHVVGVDVGFENPMFACLEMDYEEADNDPTGEAAANTQQTLTFYELDLGLNHVVRKYSEPLEEHGNFLITVPGGSDGPSGVLICSENYITYKNFGDQPDIRCPIPRRRNDLDDPERGMIFVCSATHKTKSMFFFLAQTEQGDIFKITLETDEDMVTEIRLKYFDTVPVAAAMCVLKTGFLFVASEFGNHYLYQIAHLGDDDEEPEFSSAMPLEEGDTFFFQPRPLKNLVLVDELDSLSPILFCQIADLANEDTPQLYVACGRGPRSSLRVLRHGLEVSEMAVSELPGNPNAVWTVRRHIEDEFDAYIIVSFVNATLVLSIGETVEEVTDSGFLGTTPTLSCSLLGDDALVQVYPDGIRHIRADKRVNEWKTPGKKTIVKCAVNQRQVVIALTGGELVYFEMDPSGQLNEYTERKEMSADVVCMSLANVPPGEQRSRFLAVGLVDNTVRIISLDPSDCLQPLSMQALPAQPESLCIVEMGGTEKQDELGERGSIGFLYLNIGLQNGVLLRTVLDPVTGDLSDTRTRYLGSRPVKLFRVRMQGQEAVLAMSSRSWLSYSYQSRFHLTPLSYETLEFASGFASEQCPEGIVAISTNTLRILALEKLGAVFNQVAFPLQYTPRKFVIHPESNNLIIIETDHNAYTEATKAQRKQQMAEEMVEAAGEDERELAAEMAAAFLNENLPESIFGAPKAGNGQWASVIRVMNPIQGNTLDLVQLEQNEAAFSVAVCRFSNTGEDWYVLVGVAKDLILNPRSVAGGFVYTYKLVNNGEKLEFLHKTPVEEVPAAIAPFQGRVLIGVGKLLRVYDLGKKKLLRKCENKHIANYISGIQTIGHRVIVSDVQESFIWVRYKRNENQLIIFADDTYPRWVTTASLLDYDTVAGADKFGNICVVRLPPNTNDEVDEDPTGNKALWDRGLLNGASQKAEVIMNYHVGETVLSLQKTTLIPGGSESLVYTTLSGGIGILVPFTSHEDHDFFQHVEMHLRSEHPPLCGRDHLSFRSYYFPVKNVIDGDLCEQFNSMEPNKQKNVSEELDRTPPEVSKKLEDIRTRYAF</sequence>
<organism>
    <name type="scientific">Bos taurus</name>
    <name type="common">Bovine</name>
    <dbReference type="NCBI Taxonomy" id="9913"/>
    <lineage>
        <taxon>Eukaryota</taxon>
        <taxon>Metazoa</taxon>
        <taxon>Chordata</taxon>
        <taxon>Craniata</taxon>
        <taxon>Vertebrata</taxon>
        <taxon>Euteleostomi</taxon>
        <taxon>Mammalia</taxon>
        <taxon>Eutheria</taxon>
        <taxon>Laurasiatheria</taxon>
        <taxon>Artiodactyla</taxon>
        <taxon>Ruminantia</taxon>
        <taxon>Pecora</taxon>
        <taxon>Bovidae</taxon>
        <taxon>Bovinae</taxon>
        <taxon>Bos</taxon>
    </lineage>
</organism>
<protein>
    <recommendedName>
        <fullName>Splicing factor 3B subunit 3</fullName>
    </recommendedName>
    <alternativeName>
        <fullName>Pre-mRNA-splicing factor SF3b 130 kDa subunit</fullName>
        <shortName>SF3b130</shortName>
    </alternativeName>
    <alternativeName>
        <fullName>Spliceosome-associated protein 130</fullName>
        <shortName>SAP 130</shortName>
    </alternativeName>
</protein>
<reference key="1">
    <citation type="submission" date="2006-10" db="EMBL/GenBank/DDBJ databases">
        <authorList>
            <consortium name="NIH - Mammalian Gene Collection (MGC) project"/>
        </authorList>
    </citation>
    <scope>NUCLEOTIDE SEQUENCE [LARGE SCALE MRNA]</scope>
    <source>
        <strain>Hereford</strain>
        <tissue>Brain cortex</tissue>
    </source>
</reference>
<dbReference type="EMBL" id="BC126518">
    <property type="protein sequence ID" value="AAI26519.1"/>
    <property type="molecule type" value="mRNA"/>
</dbReference>
<dbReference type="RefSeq" id="NP_001071319.1">
    <property type="nucleotide sequence ID" value="NM_001077851.1"/>
</dbReference>
<dbReference type="SMR" id="A0JN52"/>
<dbReference type="FunCoup" id="A0JN52">
    <property type="interactions" value="5239"/>
</dbReference>
<dbReference type="STRING" id="9913.ENSBTAP00000014050"/>
<dbReference type="PaxDb" id="9913-ENSBTAP00000014050"/>
<dbReference type="PeptideAtlas" id="A0JN52"/>
<dbReference type="Ensembl" id="ENSBTAT00000014050.7">
    <property type="protein sequence ID" value="ENSBTAP00000014050.5"/>
    <property type="gene ID" value="ENSBTAG00000010627.7"/>
</dbReference>
<dbReference type="GeneID" id="504962"/>
<dbReference type="KEGG" id="bta:504962"/>
<dbReference type="CTD" id="23450"/>
<dbReference type="VEuPathDB" id="HostDB:ENSBTAG00000010627"/>
<dbReference type="VGNC" id="VGNC:34511">
    <property type="gene designation" value="SF3B3"/>
</dbReference>
<dbReference type="eggNOG" id="KOG1898">
    <property type="taxonomic scope" value="Eukaryota"/>
</dbReference>
<dbReference type="GeneTree" id="ENSGT00950000183151"/>
<dbReference type="HOGENOM" id="CLU_003246_0_0_1"/>
<dbReference type="InParanoid" id="A0JN52"/>
<dbReference type="OMA" id="PRATGHW"/>
<dbReference type="OrthoDB" id="436637at2759"/>
<dbReference type="TreeFam" id="TF105685"/>
<dbReference type="Reactome" id="R-BTA-72163">
    <property type="pathway name" value="mRNA Splicing - Major Pathway"/>
</dbReference>
<dbReference type="Reactome" id="R-BTA-72165">
    <property type="pathway name" value="mRNA Splicing - Minor Pathway"/>
</dbReference>
<dbReference type="Proteomes" id="UP000009136">
    <property type="component" value="Chromosome 18"/>
</dbReference>
<dbReference type="Bgee" id="ENSBTAG00000010627">
    <property type="expression patterns" value="Expressed in ileum and 106 other cell types or tissues"/>
</dbReference>
<dbReference type="GO" id="GO:0071013">
    <property type="term" value="C:catalytic step 2 spliceosome"/>
    <property type="evidence" value="ECO:0007669"/>
    <property type="project" value="Ensembl"/>
</dbReference>
<dbReference type="GO" id="GO:0005730">
    <property type="term" value="C:nucleolus"/>
    <property type="evidence" value="ECO:0007669"/>
    <property type="project" value="Ensembl"/>
</dbReference>
<dbReference type="GO" id="GO:0005654">
    <property type="term" value="C:nucleoplasm"/>
    <property type="evidence" value="ECO:0007669"/>
    <property type="project" value="Ensembl"/>
</dbReference>
<dbReference type="GO" id="GO:0005634">
    <property type="term" value="C:nucleus"/>
    <property type="evidence" value="ECO:0000250"/>
    <property type="project" value="UniProtKB"/>
</dbReference>
<dbReference type="GO" id="GO:0005689">
    <property type="term" value="C:U12-type spliceosomal complex"/>
    <property type="evidence" value="ECO:0007669"/>
    <property type="project" value="Ensembl"/>
</dbReference>
<dbReference type="GO" id="GO:0005686">
    <property type="term" value="C:U2 snRNP"/>
    <property type="evidence" value="ECO:0000318"/>
    <property type="project" value="GO_Central"/>
</dbReference>
<dbReference type="GO" id="GO:0071005">
    <property type="term" value="C:U2-type precatalytic spliceosome"/>
    <property type="evidence" value="ECO:0000250"/>
    <property type="project" value="UniProtKB"/>
</dbReference>
<dbReference type="GO" id="GO:0005684">
    <property type="term" value="C:U2-type spliceosomal complex"/>
    <property type="evidence" value="ECO:0000250"/>
    <property type="project" value="UniProtKB"/>
</dbReference>
<dbReference type="GO" id="GO:0044877">
    <property type="term" value="F:protein-containing complex binding"/>
    <property type="evidence" value="ECO:0007669"/>
    <property type="project" value="Ensembl"/>
</dbReference>
<dbReference type="GO" id="GO:0030620">
    <property type="term" value="F:U2 snRNA binding"/>
    <property type="evidence" value="ECO:0000318"/>
    <property type="project" value="GO_Central"/>
</dbReference>
<dbReference type="GO" id="GO:0000398">
    <property type="term" value="P:mRNA splicing, via spliceosome"/>
    <property type="evidence" value="ECO:0000250"/>
    <property type="project" value="UniProtKB"/>
</dbReference>
<dbReference type="GO" id="GO:0042177">
    <property type="term" value="P:negative regulation of protein catabolic process"/>
    <property type="evidence" value="ECO:0007669"/>
    <property type="project" value="Ensembl"/>
</dbReference>
<dbReference type="FunFam" id="2.130.10.10:FF:001721">
    <property type="entry name" value="Spliceosomal protein sap, putative"/>
    <property type="match status" value="1"/>
</dbReference>
<dbReference type="FunFam" id="1.10.150.910:FF:000002">
    <property type="entry name" value="Splicing factor 3B subunit 3"/>
    <property type="match status" value="1"/>
</dbReference>
<dbReference type="FunFam" id="2.130.10.10:FF:000027">
    <property type="entry name" value="Splicing factor 3B subunit 3"/>
    <property type="match status" value="1"/>
</dbReference>
<dbReference type="FunFam" id="2.130.10.10:FF:000041">
    <property type="entry name" value="Splicing factor 3b subunit 3"/>
    <property type="match status" value="1"/>
</dbReference>
<dbReference type="Gene3D" id="1.10.150.910">
    <property type="match status" value="1"/>
</dbReference>
<dbReference type="Gene3D" id="2.130.10.10">
    <property type="entry name" value="YVTN repeat-like/Quinoprotein amine dehydrogenase"/>
    <property type="match status" value="3"/>
</dbReference>
<dbReference type="InterPro" id="IPR018846">
    <property type="entry name" value="Beta-prop_RSE1/DDB1/CPSF1_1st"/>
</dbReference>
<dbReference type="InterPro" id="IPR004871">
    <property type="entry name" value="Cleavage/polyA-sp_fac_asu_C"/>
</dbReference>
<dbReference type="InterPro" id="IPR050358">
    <property type="entry name" value="RSE1/DDB1/CFT1/CPSF1"/>
</dbReference>
<dbReference type="InterPro" id="IPR015943">
    <property type="entry name" value="WD40/YVTN_repeat-like_dom_sf"/>
</dbReference>
<dbReference type="InterPro" id="IPR036322">
    <property type="entry name" value="WD40_repeat_dom_sf"/>
</dbReference>
<dbReference type="PANTHER" id="PTHR10644">
    <property type="entry name" value="DNA REPAIR/RNA PROCESSING CPSF FAMILY"/>
    <property type="match status" value="1"/>
</dbReference>
<dbReference type="Pfam" id="PF10433">
    <property type="entry name" value="Beta-prop_RSE1_1st"/>
    <property type="match status" value="1"/>
</dbReference>
<dbReference type="Pfam" id="PF23726">
    <property type="entry name" value="Beta-prop_RSE1_2nd"/>
    <property type="match status" value="1"/>
</dbReference>
<dbReference type="Pfam" id="PF03178">
    <property type="entry name" value="CPSF_A"/>
    <property type="match status" value="1"/>
</dbReference>
<dbReference type="SUPFAM" id="SSF50978">
    <property type="entry name" value="WD40 repeat-like"/>
    <property type="match status" value="1"/>
</dbReference>